<proteinExistence type="inferred from homology"/>
<evidence type="ECO:0000255" key="1">
    <source>
        <dbReference type="HAMAP-Rule" id="MF_00536"/>
    </source>
</evidence>
<dbReference type="EC" id="1.1.1.262" evidence="1"/>
<dbReference type="EMBL" id="AE003852">
    <property type="protein sequence ID" value="AAF93617.1"/>
    <property type="molecule type" value="Genomic_DNA"/>
</dbReference>
<dbReference type="PIR" id="C82323">
    <property type="entry name" value="C82323"/>
</dbReference>
<dbReference type="RefSeq" id="NP_230098.1">
    <property type="nucleotide sequence ID" value="NC_002505.1"/>
</dbReference>
<dbReference type="RefSeq" id="WP_000095773.1">
    <property type="nucleotide sequence ID" value="NZ_LT906614.1"/>
</dbReference>
<dbReference type="SMR" id="Q9KUS1"/>
<dbReference type="STRING" id="243277.VC_0444"/>
<dbReference type="DNASU" id="2615776"/>
<dbReference type="EnsemblBacteria" id="AAF93617">
    <property type="protein sequence ID" value="AAF93617"/>
    <property type="gene ID" value="VC_0444"/>
</dbReference>
<dbReference type="KEGG" id="vch:VC_0444"/>
<dbReference type="PATRIC" id="fig|243277.26.peg.418"/>
<dbReference type="eggNOG" id="COG1995">
    <property type="taxonomic scope" value="Bacteria"/>
</dbReference>
<dbReference type="HOGENOM" id="CLU_040168_2_0_6"/>
<dbReference type="UniPathway" id="UPA00244">
    <property type="reaction ID" value="UER00312"/>
</dbReference>
<dbReference type="Proteomes" id="UP000000584">
    <property type="component" value="Chromosome 1"/>
</dbReference>
<dbReference type="GO" id="GO:0005737">
    <property type="term" value="C:cytoplasm"/>
    <property type="evidence" value="ECO:0007669"/>
    <property type="project" value="UniProtKB-SubCell"/>
</dbReference>
<dbReference type="GO" id="GO:0050570">
    <property type="term" value="F:4-hydroxythreonine-4-phosphate dehydrogenase activity"/>
    <property type="evidence" value="ECO:0000318"/>
    <property type="project" value="GO_Central"/>
</dbReference>
<dbReference type="GO" id="GO:0050897">
    <property type="term" value="F:cobalt ion binding"/>
    <property type="evidence" value="ECO:0007669"/>
    <property type="project" value="UniProtKB-UniRule"/>
</dbReference>
<dbReference type="GO" id="GO:0000287">
    <property type="term" value="F:magnesium ion binding"/>
    <property type="evidence" value="ECO:0007669"/>
    <property type="project" value="UniProtKB-UniRule"/>
</dbReference>
<dbReference type="GO" id="GO:0051287">
    <property type="term" value="F:NAD binding"/>
    <property type="evidence" value="ECO:0007669"/>
    <property type="project" value="InterPro"/>
</dbReference>
<dbReference type="GO" id="GO:0008270">
    <property type="term" value="F:zinc ion binding"/>
    <property type="evidence" value="ECO:0007669"/>
    <property type="project" value="UniProtKB-UniRule"/>
</dbReference>
<dbReference type="GO" id="GO:0042823">
    <property type="term" value="P:pyridoxal phosphate biosynthetic process"/>
    <property type="evidence" value="ECO:0000318"/>
    <property type="project" value="GO_Central"/>
</dbReference>
<dbReference type="GO" id="GO:0008615">
    <property type="term" value="P:pyridoxine biosynthetic process"/>
    <property type="evidence" value="ECO:0000318"/>
    <property type="project" value="GO_Central"/>
</dbReference>
<dbReference type="Gene3D" id="3.40.718.10">
    <property type="entry name" value="Isopropylmalate Dehydrogenase"/>
    <property type="match status" value="1"/>
</dbReference>
<dbReference type="HAMAP" id="MF_00536">
    <property type="entry name" value="PdxA"/>
    <property type="match status" value="1"/>
</dbReference>
<dbReference type="InterPro" id="IPR037510">
    <property type="entry name" value="PdxA"/>
</dbReference>
<dbReference type="InterPro" id="IPR005255">
    <property type="entry name" value="PdxA_fam"/>
</dbReference>
<dbReference type="NCBIfam" id="TIGR00557">
    <property type="entry name" value="pdxA"/>
    <property type="match status" value="1"/>
</dbReference>
<dbReference type="PANTHER" id="PTHR30004">
    <property type="entry name" value="4-HYDROXYTHREONINE-4-PHOSPHATE DEHYDROGENASE"/>
    <property type="match status" value="1"/>
</dbReference>
<dbReference type="PANTHER" id="PTHR30004:SF5">
    <property type="entry name" value="4-HYDROXYTHREONINE-4-PHOSPHATE DEHYDROGENASE"/>
    <property type="match status" value="1"/>
</dbReference>
<dbReference type="Pfam" id="PF04166">
    <property type="entry name" value="PdxA"/>
    <property type="match status" value="1"/>
</dbReference>
<dbReference type="SUPFAM" id="SSF53659">
    <property type="entry name" value="Isocitrate/Isopropylmalate dehydrogenase-like"/>
    <property type="match status" value="1"/>
</dbReference>
<name>PDXA_VIBCH</name>
<reference key="1">
    <citation type="journal article" date="2000" name="Nature">
        <title>DNA sequence of both chromosomes of the cholera pathogen Vibrio cholerae.</title>
        <authorList>
            <person name="Heidelberg J.F."/>
            <person name="Eisen J.A."/>
            <person name="Nelson W.C."/>
            <person name="Clayton R.A."/>
            <person name="Gwinn M.L."/>
            <person name="Dodson R.J."/>
            <person name="Haft D.H."/>
            <person name="Hickey E.K."/>
            <person name="Peterson J.D."/>
            <person name="Umayam L.A."/>
            <person name="Gill S.R."/>
            <person name="Nelson K.E."/>
            <person name="Read T.D."/>
            <person name="Tettelin H."/>
            <person name="Richardson D.L."/>
            <person name="Ermolaeva M.D."/>
            <person name="Vamathevan J.J."/>
            <person name="Bass S."/>
            <person name="Qin H."/>
            <person name="Dragoi I."/>
            <person name="Sellers P."/>
            <person name="McDonald L.A."/>
            <person name="Utterback T.R."/>
            <person name="Fleischmann R.D."/>
            <person name="Nierman W.C."/>
            <person name="White O."/>
            <person name="Salzberg S.L."/>
            <person name="Smith H.O."/>
            <person name="Colwell R.R."/>
            <person name="Mekalanos J.J."/>
            <person name="Venter J.C."/>
            <person name="Fraser C.M."/>
        </authorList>
    </citation>
    <scope>NUCLEOTIDE SEQUENCE [LARGE SCALE GENOMIC DNA]</scope>
    <source>
        <strain>ATCC 39315 / El Tor Inaba N16961</strain>
    </source>
</reference>
<comment type="function">
    <text evidence="1">Catalyzes the NAD(P)-dependent oxidation of 4-(phosphooxy)-L-threonine (HTP) into 2-amino-3-oxo-4-(phosphooxy)butyric acid which spontaneously decarboxylates to form 3-amino-2-oxopropyl phosphate (AHAP).</text>
</comment>
<comment type="catalytic activity">
    <reaction evidence="1">
        <text>4-(phosphooxy)-L-threonine + NAD(+) = 3-amino-2-oxopropyl phosphate + CO2 + NADH</text>
        <dbReference type="Rhea" id="RHEA:32275"/>
        <dbReference type="ChEBI" id="CHEBI:16526"/>
        <dbReference type="ChEBI" id="CHEBI:57279"/>
        <dbReference type="ChEBI" id="CHEBI:57540"/>
        <dbReference type="ChEBI" id="CHEBI:57945"/>
        <dbReference type="ChEBI" id="CHEBI:58452"/>
        <dbReference type="EC" id="1.1.1.262"/>
    </reaction>
</comment>
<comment type="cofactor">
    <cofactor evidence="1">
        <name>Zn(2+)</name>
        <dbReference type="ChEBI" id="CHEBI:29105"/>
    </cofactor>
    <cofactor evidence="1">
        <name>Mg(2+)</name>
        <dbReference type="ChEBI" id="CHEBI:18420"/>
    </cofactor>
    <cofactor evidence="1">
        <name>Co(2+)</name>
        <dbReference type="ChEBI" id="CHEBI:48828"/>
    </cofactor>
    <text evidence="1">Binds 1 divalent metal cation per subunit. Can use ions such as Zn(2+), Mg(2+) or Co(2+).</text>
</comment>
<comment type="pathway">
    <text evidence="1">Cofactor biosynthesis; pyridoxine 5'-phosphate biosynthesis; pyridoxine 5'-phosphate from D-erythrose 4-phosphate: step 4/5.</text>
</comment>
<comment type="subunit">
    <text evidence="1">Homodimer.</text>
</comment>
<comment type="subcellular location">
    <subcellularLocation>
        <location evidence="1">Cytoplasm</location>
    </subcellularLocation>
</comment>
<comment type="miscellaneous">
    <text evidence="1">The active site is located at the dimer interface.</text>
</comment>
<comment type="similarity">
    <text evidence="1">Belongs to the PdxA family.</text>
</comment>
<sequence>MSSKRIIVTAGEPAGIGPDLVLALSAQDWPHQLVVCADKALLAQRATQLGIQVKLLDYQRDNPVQAQQAGTLLVEHIPLAEPVVAGQLNPANGHYVLKTLERAAKGCMNGEFDAIVTGPVHKGVINRAGVAFSGHTEFFAEQSKTPLVVMMLATEGLRTALVTTHLPLAEVPQAITCERLEQIVHILHKDLVEKFAIAEPKIYVCGLNPHAGEDGVLGMDEIETITPTLQRLREQYGMQLVGPLPADTIFSEKYLQQADAVLGMYHDQVLPVLKYKGFGRSVNITLGLPFIRTSVDHGTALDLAGTGQADAGSFWTALAYAIELVDKKAQ</sequence>
<accession>Q9KUS1</accession>
<gene>
    <name evidence="1" type="primary">pdxA</name>
    <name type="ordered locus">VC_0444</name>
</gene>
<organism>
    <name type="scientific">Vibrio cholerae serotype O1 (strain ATCC 39315 / El Tor Inaba N16961)</name>
    <dbReference type="NCBI Taxonomy" id="243277"/>
    <lineage>
        <taxon>Bacteria</taxon>
        <taxon>Pseudomonadati</taxon>
        <taxon>Pseudomonadota</taxon>
        <taxon>Gammaproteobacteria</taxon>
        <taxon>Vibrionales</taxon>
        <taxon>Vibrionaceae</taxon>
        <taxon>Vibrio</taxon>
    </lineage>
</organism>
<protein>
    <recommendedName>
        <fullName evidence="1">4-hydroxythreonine-4-phosphate dehydrogenase</fullName>
        <ecNumber evidence="1">1.1.1.262</ecNumber>
    </recommendedName>
    <alternativeName>
        <fullName evidence="1">4-(phosphohydroxy)-L-threonine dehydrogenase</fullName>
    </alternativeName>
</protein>
<feature type="chain" id="PRO_0000188833" description="4-hydroxythreonine-4-phosphate dehydrogenase">
    <location>
        <begin position="1"/>
        <end position="330"/>
    </location>
</feature>
<feature type="binding site" evidence="1">
    <location>
        <position position="135"/>
    </location>
    <ligand>
        <name>substrate</name>
    </ligand>
</feature>
<feature type="binding site" evidence="1">
    <location>
        <position position="136"/>
    </location>
    <ligand>
        <name>substrate</name>
    </ligand>
</feature>
<feature type="binding site" evidence="1">
    <location>
        <position position="165"/>
    </location>
    <ligand>
        <name>a divalent metal cation</name>
        <dbReference type="ChEBI" id="CHEBI:60240"/>
        <note>ligand shared between dimeric partners</note>
    </ligand>
</feature>
<feature type="binding site" evidence="1">
    <location>
        <position position="210"/>
    </location>
    <ligand>
        <name>a divalent metal cation</name>
        <dbReference type="ChEBI" id="CHEBI:60240"/>
        <note>ligand shared between dimeric partners</note>
    </ligand>
</feature>
<feature type="binding site" evidence="1">
    <location>
        <position position="266"/>
    </location>
    <ligand>
        <name>a divalent metal cation</name>
        <dbReference type="ChEBI" id="CHEBI:60240"/>
        <note>ligand shared between dimeric partners</note>
    </ligand>
</feature>
<feature type="binding site" evidence="1">
    <location>
        <position position="274"/>
    </location>
    <ligand>
        <name>substrate</name>
    </ligand>
</feature>
<feature type="binding site" evidence="1">
    <location>
        <position position="283"/>
    </location>
    <ligand>
        <name>substrate</name>
    </ligand>
</feature>
<feature type="binding site" evidence="1">
    <location>
        <position position="292"/>
    </location>
    <ligand>
        <name>substrate</name>
    </ligand>
</feature>
<keyword id="KW-0170">Cobalt</keyword>
<keyword id="KW-0963">Cytoplasm</keyword>
<keyword id="KW-0460">Magnesium</keyword>
<keyword id="KW-0479">Metal-binding</keyword>
<keyword id="KW-0520">NAD</keyword>
<keyword id="KW-0521">NADP</keyword>
<keyword id="KW-0560">Oxidoreductase</keyword>
<keyword id="KW-0664">Pyridoxine biosynthesis</keyword>
<keyword id="KW-1185">Reference proteome</keyword>
<keyword id="KW-0862">Zinc</keyword>